<evidence type="ECO:0000255" key="1">
    <source>
        <dbReference type="HAMAP-Rule" id="MF_00316"/>
    </source>
</evidence>
<proteinExistence type="inferred from homology"/>
<feature type="chain" id="PRO_1000132963" description="Molybdenum cofactor guanylyltransferase">
    <location>
        <begin position="1"/>
        <end position="218"/>
    </location>
</feature>
<feature type="binding site" evidence="1">
    <location>
        <begin position="16"/>
        <end position="18"/>
    </location>
    <ligand>
        <name>GTP</name>
        <dbReference type="ChEBI" id="CHEBI:37565"/>
    </ligand>
</feature>
<feature type="binding site" evidence="1">
    <location>
        <position position="28"/>
    </location>
    <ligand>
        <name>GTP</name>
        <dbReference type="ChEBI" id="CHEBI:37565"/>
    </ligand>
</feature>
<feature type="binding site" evidence="1">
    <location>
        <position position="56"/>
    </location>
    <ligand>
        <name>GTP</name>
        <dbReference type="ChEBI" id="CHEBI:37565"/>
    </ligand>
</feature>
<feature type="binding site" evidence="1">
    <location>
        <position position="74"/>
    </location>
    <ligand>
        <name>GTP</name>
        <dbReference type="ChEBI" id="CHEBI:37565"/>
    </ligand>
</feature>
<feature type="binding site" evidence="1">
    <location>
        <position position="109"/>
    </location>
    <ligand>
        <name>GTP</name>
        <dbReference type="ChEBI" id="CHEBI:37565"/>
    </ligand>
</feature>
<feature type="binding site" evidence="1">
    <location>
        <position position="109"/>
    </location>
    <ligand>
        <name>Mg(2+)</name>
        <dbReference type="ChEBI" id="CHEBI:18420"/>
    </ligand>
</feature>
<organism>
    <name type="scientific">Sinorhizobium fredii (strain NBRC 101917 / NGR234)</name>
    <dbReference type="NCBI Taxonomy" id="394"/>
    <lineage>
        <taxon>Bacteria</taxon>
        <taxon>Pseudomonadati</taxon>
        <taxon>Pseudomonadota</taxon>
        <taxon>Alphaproteobacteria</taxon>
        <taxon>Hyphomicrobiales</taxon>
        <taxon>Rhizobiaceae</taxon>
        <taxon>Sinorhizobium/Ensifer group</taxon>
        <taxon>Sinorhizobium</taxon>
    </lineage>
</organism>
<comment type="function">
    <text evidence="1">Transfers a GMP moiety from GTP to Mo-molybdopterin (Mo-MPT) cofactor (Moco or molybdenum cofactor) to form Mo-molybdopterin guanine dinucleotide (Mo-MGD) cofactor.</text>
</comment>
<comment type="catalytic activity">
    <reaction evidence="1">
        <text>Mo-molybdopterin + GTP + H(+) = Mo-molybdopterin guanine dinucleotide + diphosphate</text>
        <dbReference type="Rhea" id="RHEA:34243"/>
        <dbReference type="ChEBI" id="CHEBI:15378"/>
        <dbReference type="ChEBI" id="CHEBI:33019"/>
        <dbReference type="ChEBI" id="CHEBI:37565"/>
        <dbReference type="ChEBI" id="CHEBI:71302"/>
        <dbReference type="ChEBI" id="CHEBI:71310"/>
        <dbReference type="EC" id="2.7.7.77"/>
    </reaction>
</comment>
<comment type="cofactor">
    <cofactor evidence="1">
        <name>Mg(2+)</name>
        <dbReference type="ChEBI" id="CHEBI:18420"/>
    </cofactor>
</comment>
<comment type="subunit">
    <text evidence="1">Monomer.</text>
</comment>
<comment type="subcellular location">
    <subcellularLocation>
        <location evidence="1">Cytoplasm</location>
    </subcellularLocation>
</comment>
<comment type="domain">
    <text evidence="1">The N-terminal domain determines nucleotide recognition and specific binding, while the C-terminal domain determines the specific binding to the target protein.</text>
</comment>
<comment type="similarity">
    <text evidence="1">Belongs to the MobA family.</text>
</comment>
<protein>
    <recommendedName>
        <fullName evidence="1">Molybdenum cofactor guanylyltransferase</fullName>
        <shortName evidence="1">MoCo guanylyltransferase</shortName>
        <ecNumber evidence="1">2.7.7.77</ecNumber>
    </recommendedName>
    <alternativeName>
        <fullName evidence="1">GTP:molybdopterin guanylyltransferase</fullName>
    </alternativeName>
    <alternativeName>
        <fullName evidence="1">Mo-MPT guanylyltransferase</fullName>
    </alternativeName>
    <alternativeName>
        <fullName evidence="1">Molybdopterin guanylyltransferase</fullName>
    </alternativeName>
    <alternativeName>
        <fullName evidence="1">Molybdopterin-guanine dinucleotide synthase</fullName>
        <shortName evidence="1">MGD synthase</shortName>
    </alternativeName>
</protein>
<keyword id="KW-0963">Cytoplasm</keyword>
<keyword id="KW-0342">GTP-binding</keyword>
<keyword id="KW-0460">Magnesium</keyword>
<keyword id="KW-0479">Metal-binding</keyword>
<keyword id="KW-0501">Molybdenum cofactor biosynthesis</keyword>
<keyword id="KW-0547">Nucleotide-binding</keyword>
<keyword id="KW-1185">Reference proteome</keyword>
<keyword id="KW-0808">Transferase</keyword>
<reference key="1">
    <citation type="journal article" date="2009" name="Appl. Environ. Microbiol.">
        <title>Rhizobium sp. strain NGR234 possesses a remarkable number of secretion systems.</title>
        <authorList>
            <person name="Schmeisser C."/>
            <person name="Liesegang H."/>
            <person name="Krysciak D."/>
            <person name="Bakkou N."/>
            <person name="Le Quere A."/>
            <person name="Wollherr A."/>
            <person name="Heinemeyer I."/>
            <person name="Morgenstern B."/>
            <person name="Pommerening-Roeser A."/>
            <person name="Flores M."/>
            <person name="Palacios R."/>
            <person name="Brenner S."/>
            <person name="Gottschalk G."/>
            <person name="Schmitz R.A."/>
            <person name="Broughton W.J."/>
            <person name="Perret X."/>
            <person name="Strittmatter A.W."/>
            <person name="Streit W.R."/>
        </authorList>
    </citation>
    <scope>NUCLEOTIDE SEQUENCE [LARGE SCALE GENOMIC DNA]</scope>
    <source>
        <strain>NBRC 101917 / NGR234</strain>
    </source>
</reference>
<accession>C3MDF9</accession>
<name>MOBA_SINFN</name>
<gene>
    <name evidence="1" type="primary">mobA</name>
    <name type="ordered locus">NGR_c17140</name>
</gene>
<sequence length="218" mass="22917">MVDKTSDSGRCPAVVLAGGRSSRMGSPKAAVLLGGQTMLDRVIERLSPQVASIAVNLNAHSGGALPSGHPAIADTIPGLPGPLAGVLAAMRHARQVAPGASHVLTVPIDAPFFPGTLAARLQGALIVGDEIAVAWSLGEMHPLFALWPLAIADDLDSWIRTDEKRRVRAFIARHASVAVDFPVVATKAGPLDPFLNVNTPQQLEEAEEWLNRLEDSAI</sequence>
<dbReference type="EC" id="2.7.7.77" evidence="1"/>
<dbReference type="EMBL" id="CP001389">
    <property type="protein sequence ID" value="ACP25478.1"/>
    <property type="molecule type" value="Genomic_DNA"/>
</dbReference>
<dbReference type="RefSeq" id="WP_012708247.1">
    <property type="nucleotide sequence ID" value="NC_012587.1"/>
</dbReference>
<dbReference type="RefSeq" id="YP_002826231.1">
    <property type="nucleotide sequence ID" value="NC_012587.1"/>
</dbReference>
<dbReference type="SMR" id="C3MDF9"/>
<dbReference type="STRING" id="394.NGR_c17140"/>
<dbReference type="KEGG" id="rhi:NGR_c17140"/>
<dbReference type="PATRIC" id="fig|394.7.peg.4535"/>
<dbReference type="eggNOG" id="COG0746">
    <property type="taxonomic scope" value="Bacteria"/>
</dbReference>
<dbReference type="HOGENOM" id="CLU_055597_3_2_5"/>
<dbReference type="OrthoDB" id="9788394at2"/>
<dbReference type="Proteomes" id="UP000001054">
    <property type="component" value="Chromosome"/>
</dbReference>
<dbReference type="GO" id="GO:0005737">
    <property type="term" value="C:cytoplasm"/>
    <property type="evidence" value="ECO:0007669"/>
    <property type="project" value="UniProtKB-SubCell"/>
</dbReference>
<dbReference type="GO" id="GO:0005525">
    <property type="term" value="F:GTP binding"/>
    <property type="evidence" value="ECO:0007669"/>
    <property type="project" value="UniProtKB-UniRule"/>
</dbReference>
<dbReference type="GO" id="GO:0046872">
    <property type="term" value="F:metal ion binding"/>
    <property type="evidence" value="ECO:0007669"/>
    <property type="project" value="UniProtKB-KW"/>
</dbReference>
<dbReference type="GO" id="GO:0061603">
    <property type="term" value="F:molybdenum cofactor guanylyltransferase activity"/>
    <property type="evidence" value="ECO:0007669"/>
    <property type="project" value="UniProtKB-EC"/>
</dbReference>
<dbReference type="GO" id="GO:1902758">
    <property type="term" value="P:bis(molybdopterin guanine dinucleotide)molybdenum biosynthetic process"/>
    <property type="evidence" value="ECO:0007669"/>
    <property type="project" value="TreeGrafter"/>
</dbReference>
<dbReference type="CDD" id="cd02503">
    <property type="entry name" value="MobA"/>
    <property type="match status" value="1"/>
</dbReference>
<dbReference type="Gene3D" id="3.90.550.10">
    <property type="entry name" value="Spore Coat Polysaccharide Biosynthesis Protein SpsA, Chain A"/>
    <property type="match status" value="1"/>
</dbReference>
<dbReference type="HAMAP" id="MF_00316">
    <property type="entry name" value="MobA"/>
    <property type="match status" value="1"/>
</dbReference>
<dbReference type="InterPro" id="IPR025877">
    <property type="entry name" value="MobA-like_NTP_Trfase"/>
</dbReference>
<dbReference type="InterPro" id="IPR013482">
    <property type="entry name" value="Molybde_CF_guanTrfase"/>
</dbReference>
<dbReference type="InterPro" id="IPR029044">
    <property type="entry name" value="Nucleotide-diphossugar_trans"/>
</dbReference>
<dbReference type="NCBIfam" id="TIGR02665">
    <property type="entry name" value="molyb_mobA"/>
    <property type="match status" value="1"/>
</dbReference>
<dbReference type="PANTHER" id="PTHR19136">
    <property type="entry name" value="MOLYBDENUM COFACTOR GUANYLYLTRANSFERASE"/>
    <property type="match status" value="1"/>
</dbReference>
<dbReference type="PANTHER" id="PTHR19136:SF81">
    <property type="entry name" value="MOLYBDENUM COFACTOR GUANYLYLTRANSFERASE"/>
    <property type="match status" value="1"/>
</dbReference>
<dbReference type="Pfam" id="PF12804">
    <property type="entry name" value="NTP_transf_3"/>
    <property type="match status" value="1"/>
</dbReference>
<dbReference type="SUPFAM" id="SSF53448">
    <property type="entry name" value="Nucleotide-diphospho-sugar transferases"/>
    <property type="match status" value="1"/>
</dbReference>